<gene>
    <name evidence="1" type="primary">atpH</name>
    <name type="ordered locus">Gbem_3953</name>
</gene>
<keyword id="KW-0066">ATP synthesis</keyword>
<keyword id="KW-0997">Cell inner membrane</keyword>
<keyword id="KW-1003">Cell membrane</keyword>
<keyword id="KW-0139">CF(1)</keyword>
<keyword id="KW-0375">Hydrogen ion transport</keyword>
<keyword id="KW-0406">Ion transport</keyword>
<keyword id="KW-0472">Membrane</keyword>
<keyword id="KW-1185">Reference proteome</keyword>
<keyword id="KW-0813">Transport</keyword>
<protein>
    <recommendedName>
        <fullName evidence="1">ATP synthase subunit delta</fullName>
    </recommendedName>
    <alternativeName>
        <fullName evidence="1">ATP synthase F(1) sector subunit delta</fullName>
    </alternativeName>
    <alternativeName>
        <fullName evidence="1">F-type ATPase subunit delta</fullName>
        <shortName evidence="1">F-ATPase subunit delta</shortName>
    </alternativeName>
</protein>
<sequence length="180" mass="19293">MSTNAIAKRYAKALVQLGSEAGSVDSFNAELTRFSALLTDSRDLSAVFANPAYGIESKREVMKELVAKLQLSPMISNLLMLLLERGRISVLPQISESYGAFADELSGVIRPTLSSGLPLEASQIEEIRSALAKSTGKKVELKVEVDPSLIGGVVTKIGGKVFDGSVRTQLARIQDILQKG</sequence>
<feature type="chain" id="PRO_1000184722" description="ATP synthase subunit delta">
    <location>
        <begin position="1"/>
        <end position="180"/>
    </location>
</feature>
<name>ATPD_CITBB</name>
<organism>
    <name type="scientific">Citrifermentans bemidjiense (strain ATCC BAA-1014 / DSM 16622 / JCM 12645 / Bem)</name>
    <name type="common">Geobacter bemidjiensis</name>
    <dbReference type="NCBI Taxonomy" id="404380"/>
    <lineage>
        <taxon>Bacteria</taxon>
        <taxon>Pseudomonadati</taxon>
        <taxon>Thermodesulfobacteriota</taxon>
        <taxon>Desulfuromonadia</taxon>
        <taxon>Geobacterales</taxon>
        <taxon>Geobacteraceae</taxon>
        <taxon>Citrifermentans</taxon>
    </lineage>
</organism>
<comment type="function">
    <text evidence="1">F(1)F(0) ATP synthase produces ATP from ADP in the presence of a proton or sodium gradient. F-type ATPases consist of two structural domains, F(1) containing the extramembraneous catalytic core and F(0) containing the membrane proton channel, linked together by a central stalk and a peripheral stalk. During catalysis, ATP synthesis in the catalytic domain of F(1) is coupled via a rotary mechanism of the central stalk subunits to proton translocation.</text>
</comment>
<comment type="function">
    <text evidence="1">This protein is part of the stalk that links CF(0) to CF(1). It either transmits conformational changes from CF(0) to CF(1) or is implicated in proton conduction.</text>
</comment>
<comment type="subunit">
    <text evidence="1">F-type ATPases have 2 components, F(1) - the catalytic core - and F(0) - the membrane proton channel. F(1) has five subunits: alpha(3), beta(3), gamma(1), delta(1), epsilon(1). F(0) has three main subunits: a(1), b(2) and c(10-14). The alpha and beta chains form an alternating ring which encloses part of the gamma chain. F(1) is attached to F(0) by a central stalk formed by the gamma and epsilon chains, while a peripheral stalk is formed by the delta and b chains.</text>
</comment>
<comment type="subcellular location">
    <subcellularLocation>
        <location evidence="1">Cell inner membrane</location>
        <topology evidence="1">Peripheral membrane protein</topology>
    </subcellularLocation>
</comment>
<comment type="similarity">
    <text evidence="1">Belongs to the ATPase delta chain family.</text>
</comment>
<reference key="1">
    <citation type="submission" date="2008-07" db="EMBL/GenBank/DDBJ databases">
        <title>Complete sequence of Geobacter bemidjiensis BEM.</title>
        <authorList>
            <consortium name="US DOE Joint Genome Institute"/>
            <person name="Lucas S."/>
            <person name="Copeland A."/>
            <person name="Lapidus A."/>
            <person name="Glavina del Rio T."/>
            <person name="Dalin E."/>
            <person name="Tice H."/>
            <person name="Bruce D."/>
            <person name="Goodwin L."/>
            <person name="Pitluck S."/>
            <person name="Kiss H."/>
            <person name="Brettin T."/>
            <person name="Detter J.C."/>
            <person name="Han C."/>
            <person name="Kuske C.R."/>
            <person name="Schmutz J."/>
            <person name="Larimer F."/>
            <person name="Land M."/>
            <person name="Hauser L."/>
            <person name="Kyrpides N."/>
            <person name="Lykidis A."/>
            <person name="Lovley D."/>
            <person name="Richardson P."/>
        </authorList>
    </citation>
    <scope>NUCLEOTIDE SEQUENCE [LARGE SCALE GENOMIC DNA]</scope>
    <source>
        <strain>ATCC BAA-1014 / DSM 16622 / JCM 12645 / Bem</strain>
    </source>
</reference>
<dbReference type="EMBL" id="CP001124">
    <property type="protein sequence ID" value="ACH40945.1"/>
    <property type="molecule type" value="Genomic_DNA"/>
</dbReference>
<dbReference type="RefSeq" id="WP_012532379.1">
    <property type="nucleotide sequence ID" value="NC_011146.1"/>
</dbReference>
<dbReference type="SMR" id="B5EFJ0"/>
<dbReference type="STRING" id="404380.Gbem_3953"/>
<dbReference type="KEGG" id="gbm:Gbem_3953"/>
<dbReference type="eggNOG" id="COG0712">
    <property type="taxonomic scope" value="Bacteria"/>
</dbReference>
<dbReference type="HOGENOM" id="CLU_085114_1_1_7"/>
<dbReference type="OrthoDB" id="9802471at2"/>
<dbReference type="Proteomes" id="UP000008825">
    <property type="component" value="Chromosome"/>
</dbReference>
<dbReference type="GO" id="GO:0005886">
    <property type="term" value="C:plasma membrane"/>
    <property type="evidence" value="ECO:0007669"/>
    <property type="project" value="UniProtKB-SubCell"/>
</dbReference>
<dbReference type="GO" id="GO:0045259">
    <property type="term" value="C:proton-transporting ATP synthase complex"/>
    <property type="evidence" value="ECO:0007669"/>
    <property type="project" value="UniProtKB-KW"/>
</dbReference>
<dbReference type="GO" id="GO:0046933">
    <property type="term" value="F:proton-transporting ATP synthase activity, rotational mechanism"/>
    <property type="evidence" value="ECO:0007669"/>
    <property type="project" value="UniProtKB-UniRule"/>
</dbReference>
<dbReference type="Gene3D" id="1.10.520.20">
    <property type="entry name" value="N-terminal domain of the delta subunit of the F1F0-ATP synthase"/>
    <property type="match status" value="1"/>
</dbReference>
<dbReference type="HAMAP" id="MF_01416">
    <property type="entry name" value="ATP_synth_delta_bact"/>
    <property type="match status" value="1"/>
</dbReference>
<dbReference type="InterPro" id="IPR026015">
    <property type="entry name" value="ATP_synth_OSCP/delta_N_sf"/>
</dbReference>
<dbReference type="InterPro" id="IPR000711">
    <property type="entry name" value="ATPase_OSCP/dsu"/>
</dbReference>
<dbReference type="NCBIfam" id="TIGR01145">
    <property type="entry name" value="ATP_synt_delta"/>
    <property type="match status" value="1"/>
</dbReference>
<dbReference type="NCBIfam" id="NF004402">
    <property type="entry name" value="PRK05758.2-2"/>
    <property type="match status" value="1"/>
</dbReference>
<dbReference type="PANTHER" id="PTHR11910">
    <property type="entry name" value="ATP SYNTHASE DELTA CHAIN"/>
    <property type="match status" value="1"/>
</dbReference>
<dbReference type="Pfam" id="PF00213">
    <property type="entry name" value="OSCP"/>
    <property type="match status" value="1"/>
</dbReference>
<dbReference type="PRINTS" id="PR00125">
    <property type="entry name" value="ATPASEDELTA"/>
</dbReference>
<dbReference type="SUPFAM" id="SSF47928">
    <property type="entry name" value="N-terminal domain of the delta subunit of the F1F0-ATP synthase"/>
    <property type="match status" value="1"/>
</dbReference>
<evidence type="ECO:0000255" key="1">
    <source>
        <dbReference type="HAMAP-Rule" id="MF_01416"/>
    </source>
</evidence>
<proteinExistence type="inferred from homology"/>
<accession>B5EFJ0</accession>